<proteinExistence type="inferred from homology"/>
<comment type="function">
    <text evidence="1">Involved in regulation of DNA replication.</text>
</comment>
<comment type="similarity">
    <text evidence="1">Belongs to the CDC6/cdc18 family.</text>
</comment>
<comment type="sequence caution" evidence="2">
    <conflict type="erroneous initiation">
        <sequence resource="EMBL-CDS" id="AAV46017"/>
    </conflict>
    <text>Extended N-terminus.</text>
</comment>
<keyword id="KW-0067">ATP-binding</keyword>
<keyword id="KW-0235">DNA replication</keyword>
<keyword id="KW-0547">Nucleotide-binding</keyword>
<keyword id="KW-1185">Reference proteome</keyword>
<gene>
    <name type="primary">cdc6i</name>
    <name type="ordered locus">rrnAC1053</name>
</gene>
<name>CDC6I_HALMA</name>
<organism>
    <name type="scientific">Haloarcula marismortui (strain ATCC 43049 / DSM 3752 / JCM 8966 / VKM B-1809)</name>
    <name type="common">Halobacterium marismortui</name>
    <dbReference type="NCBI Taxonomy" id="272569"/>
    <lineage>
        <taxon>Archaea</taxon>
        <taxon>Methanobacteriati</taxon>
        <taxon>Methanobacteriota</taxon>
        <taxon>Stenosarchaea group</taxon>
        <taxon>Halobacteria</taxon>
        <taxon>Halobacteriales</taxon>
        <taxon>Haloarculaceae</taxon>
        <taxon>Haloarcula</taxon>
    </lineage>
</organism>
<reference key="1">
    <citation type="journal article" date="2004" name="Genome Res.">
        <title>Genome sequence of Haloarcula marismortui: a halophilic archaeon from the Dead Sea.</title>
        <authorList>
            <person name="Baliga N.S."/>
            <person name="Bonneau R."/>
            <person name="Facciotti M.T."/>
            <person name="Pan M."/>
            <person name="Glusman G."/>
            <person name="Deutsch E.W."/>
            <person name="Shannon P."/>
            <person name="Chiu Y."/>
            <person name="Weng R.S."/>
            <person name="Gan R.R."/>
            <person name="Hung P."/>
            <person name="Date S.V."/>
            <person name="Marcotte E."/>
            <person name="Hood L."/>
            <person name="Ng W.V."/>
        </authorList>
    </citation>
    <scope>NUCLEOTIDE SEQUENCE [LARGE SCALE GENOMIC DNA]</scope>
    <source>
        <strain>ATCC 43049 / DSM 3752 / JCM 8966 / VKM B-1809</strain>
    </source>
</reference>
<accession>Q5V385</accession>
<dbReference type="EMBL" id="AY596297">
    <property type="protein sequence ID" value="AAV46017.1"/>
    <property type="status" value="ALT_INIT"/>
    <property type="molecule type" value="Genomic_DNA"/>
</dbReference>
<dbReference type="RefSeq" id="WP_049938853.1">
    <property type="nucleotide sequence ID" value="NC_006396.1"/>
</dbReference>
<dbReference type="SMR" id="Q5V385"/>
<dbReference type="STRING" id="272569.rrnAC1053"/>
<dbReference type="PaxDb" id="272569-rrnAC1053"/>
<dbReference type="EnsemblBacteria" id="AAV46017">
    <property type="protein sequence ID" value="AAV46017"/>
    <property type="gene ID" value="rrnAC1053"/>
</dbReference>
<dbReference type="GeneID" id="40152063"/>
<dbReference type="KEGG" id="hma:rrnAC1053"/>
<dbReference type="PATRIC" id="fig|272569.17.peg.1781"/>
<dbReference type="eggNOG" id="arCOG00467">
    <property type="taxonomic scope" value="Archaea"/>
</dbReference>
<dbReference type="HOGENOM" id="CLU_025112_2_1_2"/>
<dbReference type="Proteomes" id="UP000001169">
    <property type="component" value="Chromosome I"/>
</dbReference>
<dbReference type="GO" id="GO:0005524">
    <property type="term" value="F:ATP binding"/>
    <property type="evidence" value="ECO:0007669"/>
    <property type="project" value="UniProtKB-UniRule"/>
</dbReference>
<dbReference type="GO" id="GO:0006260">
    <property type="term" value="P:DNA replication"/>
    <property type="evidence" value="ECO:0007669"/>
    <property type="project" value="UniProtKB-UniRule"/>
</dbReference>
<dbReference type="CDD" id="cd08768">
    <property type="entry name" value="Cdc6_C"/>
    <property type="match status" value="1"/>
</dbReference>
<dbReference type="FunFam" id="1.10.8.60:FF:000073">
    <property type="entry name" value="ORC1-type DNA replication protein"/>
    <property type="match status" value="1"/>
</dbReference>
<dbReference type="Gene3D" id="1.10.8.60">
    <property type="match status" value="1"/>
</dbReference>
<dbReference type="Gene3D" id="3.40.50.300">
    <property type="entry name" value="P-loop containing nucleotide triphosphate hydrolases"/>
    <property type="match status" value="1"/>
</dbReference>
<dbReference type="Gene3D" id="1.10.10.10">
    <property type="entry name" value="Winged helix-like DNA-binding domain superfamily/Winged helix DNA-binding domain"/>
    <property type="match status" value="1"/>
</dbReference>
<dbReference type="HAMAP" id="MF_01407">
    <property type="entry name" value="ORC1_type_DNA_replic_protein"/>
    <property type="match status" value="1"/>
</dbReference>
<dbReference type="InterPro" id="IPR041664">
    <property type="entry name" value="AAA_16"/>
</dbReference>
<dbReference type="InterPro" id="IPR015163">
    <property type="entry name" value="Cdc6_C"/>
</dbReference>
<dbReference type="InterPro" id="IPR055237">
    <property type="entry name" value="Cdc6_lid"/>
</dbReference>
<dbReference type="InterPro" id="IPR050311">
    <property type="entry name" value="ORC1/CDC6"/>
</dbReference>
<dbReference type="InterPro" id="IPR014277">
    <property type="entry name" value="Orc1/Cdc6_arc"/>
</dbReference>
<dbReference type="InterPro" id="IPR027417">
    <property type="entry name" value="P-loop_NTPase"/>
</dbReference>
<dbReference type="InterPro" id="IPR036388">
    <property type="entry name" value="WH-like_DNA-bd_sf"/>
</dbReference>
<dbReference type="InterPro" id="IPR036390">
    <property type="entry name" value="WH_DNA-bd_sf"/>
</dbReference>
<dbReference type="NCBIfam" id="TIGR02928">
    <property type="entry name" value="orc1/cdc6 family replication initiation protein"/>
    <property type="match status" value="1"/>
</dbReference>
<dbReference type="PANTHER" id="PTHR10763">
    <property type="entry name" value="CELL DIVISION CONTROL PROTEIN 6-RELATED"/>
    <property type="match status" value="1"/>
</dbReference>
<dbReference type="PANTHER" id="PTHR10763:SF22">
    <property type="entry name" value="ORC1-TYPE DNA REPLICATION PROTEIN"/>
    <property type="match status" value="1"/>
</dbReference>
<dbReference type="Pfam" id="PF13191">
    <property type="entry name" value="AAA_16"/>
    <property type="match status" value="1"/>
</dbReference>
<dbReference type="Pfam" id="PF09079">
    <property type="entry name" value="Cdc6_C"/>
    <property type="match status" value="1"/>
</dbReference>
<dbReference type="Pfam" id="PF22703">
    <property type="entry name" value="Cdc6_lid"/>
    <property type="match status" value="1"/>
</dbReference>
<dbReference type="SMART" id="SM01074">
    <property type="entry name" value="Cdc6_C"/>
    <property type="match status" value="1"/>
</dbReference>
<dbReference type="SUPFAM" id="SSF52540">
    <property type="entry name" value="P-loop containing nucleoside triphosphate hydrolases"/>
    <property type="match status" value="1"/>
</dbReference>
<dbReference type="SUPFAM" id="SSF46785">
    <property type="entry name" value="Winged helix' DNA-binding domain"/>
    <property type="match status" value="1"/>
</dbReference>
<protein>
    <recommendedName>
        <fullName evidence="1">ORC1-type DNA replication protein 9</fullName>
    </recommendedName>
</protein>
<feature type="chain" id="PRO_0000150984" description="ORC1-type DNA replication protein 9">
    <location>
        <begin position="1"/>
        <end position="416"/>
    </location>
</feature>
<feature type="binding site" evidence="1">
    <location>
        <begin position="79"/>
        <end position="83"/>
    </location>
    <ligand>
        <name>ATP</name>
        <dbReference type="ChEBI" id="CHEBI:30616"/>
    </ligand>
</feature>
<feature type="binding site" evidence="1">
    <location>
        <position position="226"/>
    </location>
    <ligand>
        <name>ATP</name>
        <dbReference type="ChEBI" id="CHEBI:30616"/>
    </ligand>
</feature>
<feature type="binding site" evidence="1">
    <location>
        <position position="238"/>
    </location>
    <ligand>
        <name>ATP</name>
        <dbReference type="ChEBI" id="CHEBI:30616"/>
    </ligand>
</feature>
<evidence type="ECO:0000255" key="1">
    <source>
        <dbReference type="HAMAP-Rule" id="MF_01407"/>
    </source>
</evidence>
<evidence type="ECO:0000305" key="2"/>
<sequence>MEQSEDGDLDAGDELFEEVDGDGKGEIFANRELLNIDHVPDENRIVGRDEHITELANEIGPAVTGSPPNSVILYGKTGSGKSLVANHVMERARREAQRRDRRLATVTVDCAQSRGEADTVQTIADKINRSTSGVTVPTRGISTNEYYNRLWQILGTEYDAALITLDEVDRLSDDDILMILSRAREAGKVDVPIGIISISNKVNFREQMTERVKSSLGHNEMIFDPYDGEQLRQILENRKDAFQEDILMPGVIPKTAALAAQRHGDARKAIRLLRHAGDYAKTNNIGTVKESHLELAQEQAEVERLKELISGLPPHSKYVLYALANLTDGTTNSNDWFRTTVIYDVYEEVCKTEATDTLTTDTIRGLLNELAFLEITESNQEHGGMGKGTYKEHRLLWDPNVVFKMNPGSAQVDTDR</sequence>